<sequence length="78" mass="8360">MVRLIGSLVFGGLIVLLASSNAHMVETRLGPLAMIAPHFVVLGITFFLGFAIGIVSVLANVMTRRKQKSPGKSIVIKR</sequence>
<gene>
    <name type="primary">mamL</name>
    <name type="ordered locus">amb0966</name>
</gene>
<evidence type="ECO:0000250" key="1">
    <source>
        <dbReference type="UniProtKB" id="Q6NE58"/>
    </source>
</evidence>
<evidence type="ECO:0000255" key="2"/>
<evidence type="ECO:0000269" key="3">
    <source>
    </source>
</evidence>
<evidence type="ECO:0000269" key="4">
    <source>
    </source>
</evidence>
<evidence type="ECO:0000269" key="5">
    <source>
    </source>
</evidence>
<evidence type="ECO:0000305" key="6"/>
<evidence type="ECO:0000305" key="7">
    <source>
    </source>
</evidence>
<protein>
    <recommendedName>
        <fullName evidence="6">Magnetosome protein MamL</fullName>
    </recommendedName>
</protein>
<accession>Q2W8Q5</accession>
<comment type="function">
    <text evidence="3">Essential for magnetosome formation.</text>
</comment>
<comment type="subcellular location">
    <subcellularLocation>
        <location evidence="5 7">Cell inner membrane</location>
        <topology evidence="2">Single-pass membrane protein</topology>
    </subcellularLocation>
    <subcellularLocation>
        <location evidence="1">Magnetosome membrane</location>
        <topology evidence="2">Single-pass membrane protein</topology>
    </subcellularLocation>
    <text evidence="3 5">May associate transiently with magnetosomes; in about 10% of cells, GFP tagged protein is aligned in dots or very short filaments similar to magnetosome distribution.</text>
</comment>
<comment type="induction">
    <text evidence="7">Part of the probable 18 gene mamAB operon.</text>
</comment>
<comment type="disruption phenotype">
    <text evidence="3">Cells have no magnetic response and no magnetosome membranes (PubMed:20212111). Deletion of genes mamH to mamV (amb0961 to amb0978) gives cells with no magnetosomes and no magnetic response (PubMed:20212111).</text>
</comment>
<comment type="miscellaneous">
    <text evidence="6">This bacteria makes up to 20 cubo-octahedral magnetosomes of about 45 nm in diameter which contain membrane-bound crystals of magnetite (Fe(3)O(4)).</text>
</comment>
<comment type="miscellaneous">
    <text evidence="4">Expression of just the minimal mamAB gene cluster (amb0961 to amb0978), including this gene, is sufficient to form a minimal magnetosome chain with small magnetite particles.</text>
</comment>
<comment type="similarity">
    <text evidence="6">Belongs to the magnetosome MamL family.</text>
</comment>
<reference key="1">
    <citation type="journal article" date="2005" name="DNA Res.">
        <title>Complete genome sequence of the facultative anaerobic magnetotactic bacterium Magnetospirillum sp. strain AMB-1.</title>
        <authorList>
            <person name="Matsunaga T."/>
            <person name="Okamura Y."/>
            <person name="Fukuda Y."/>
            <person name="Wahyudi A.T."/>
            <person name="Murase Y."/>
            <person name="Takeyama H."/>
        </authorList>
    </citation>
    <scope>NUCLEOTIDE SEQUENCE [LARGE SCALE GENOMIC DNA]</scope>
    <source>
        <strain>ATCC 700264 / AMB-1</strain>
    </source>
</reference>
<reference key="2">
    <citation type="journal article" date="2010" name="Proc. Natl. Acad. Sci. U.S.A.">
        <title>Comprehensive genetic dissection of the magnetosome gene island reveals the step-wise assembly of a prokaryotic organelle.</title>
        <authorList>
            <person name="Murat D."/>
            <person name="Quinlan A."/>
            <person name="Vali H."/>
            <person name="Komeili A."/>
        </authorList>
    </citation>
    <scope>FUNCTION</scope>
    <scope>SUBCELLULAR LOCATION</scope>
    <scope>PROBABLE OPERON</scope>
    <scope>DISRUPTION PHENOTYPE</scope>
    <source>
        <strain>ATCC 700264 / AMB-1</strain>
    </source>
</reference>
<reference key="3">
    <citation type="journal article" date="2012" name="Mol. Microbiol.">
        <title>The magnetosome membrane protein, MmsF, is a major regulator of magnetite biomineralization in Magnetospirillum magneticum AMB-1.</title>
        <authorList>
            <person name="Murat D."/>
            <person name="Falahati V."/>
            <person name="Bertinetti L."/>
            <person name="Csencsits R."/>
            <person name="Koernig A."/>
            <person name="Downing K."/>
            <person name="Faivre D."/>
            <person name="Komeili A."/>
        </authorList>
    </citation>
    <scope>MINIMAL MAGNETOSOME ISLAND</scope>
    <source>
        <strain>ATCC 700264 / AMB-1</strain>
    </source>
</reference>
<reference key="4">
    <citation type="journal article" date="2016" name="J. Bacteriol.">
        <title>Comparative subcellular localization analysis of magnetosome proteins reveals a unique localization behavior of Mms6 protein onto magnetite crystals.</title>
        <authorList>
            <person name="Arakaki A."/>
            <person name="Kikuchi D."/>
            <person name="Tanaka M."/>
            <person name="Yamagishi A."/>
            <person name="Yoda T."/>
            <person name="Matsunaga T."/>
        </authorList>
    </citation>
    <scope>SUBCELLULAR LOCATION</scope>
    <source>
        <strain>ATCC 700264 / AMB-1</strain>
    </source>
</reference>
<name>MAML_PARM1</name>
<keyword id="KW-0091">Biomineralization</keyword>
<keyword id="KW-0997">Cell inner membrane</keyword>
<keyword id="KW-1003">Cell membrane</keyword>
<keyword id="KW-1281">Magnetosome</keyword>
<keyword id="KW-0472">Membrane</keyword>
<keyword id="KW-0732">Signal</keyword>
<keyword id="KW-0812">Transmembrane</keyword>
<keyword id="KW-1133">Transmembrane helix</keyword>
<feature type="signal peptide" evidence="2">
    <location>
        <begin position="1"/>
        <end position="22"/>
    </location>
</feature>
<feature type="chain" id="PRO_0000447807" description="Magnetosome protein MamL" evidence="2">
    <location>
        <begin position="23"/>
        <end position="78"/>
    </location>
</feature>
<feature type="topological domain" description="Lumenal" evidence="6">
    <location>
        <begin position="23"/>
        <end position="38"/>
    </location>
</feature>
<feature type="transmembrane region" description="Helical" evidence="2">
    <location>
        <begin position="39"/>
        <end position="59"/>
    </location>
</feature>
<feature type="topological domain" description="Cytoplasmic" evidence="6">
    <location>
        <begin position="60"/>
        <end position="78"/>
    </location>
</feature>
<dbReference type="EMBL" id="AP007255">
    <property type="protein sequence ID" value="BAE49770.1"/>
    <property type="molecule type" value="Genomic_DNA"/>
</dbReference>
<dbReference type="RefSeq" id="WP_008620778.1">
    <property type="nucleotide sequence ID" value="NC_007626.1"/>
</dbReference>
<dbReference type="SMR" id="Q2W8Q5"/>
<dbReference type="STRING" id="342108.amb0966"/>
<dbReference type="KEGG" id="mag:amb0966"/>
<dbReference type="HOGENOM" id="CLU_2617815_0_0_5"/>
<dbReference type="OrthoDB" id="7359835at2"/>
<dbReference type="Proteomes" id="UP000007058">
    <property type="component" value="Chromosome"/>
</dbReference>
<dbReference type="GO" id="GO:0110146">
    <property type="term" value="C:magnetosome membrane"/>
    <property type="evidence" value="ECO:0000250"/>
    <property type="project" value="UniProtKB"/>
</dbReference>
<dbReference type="GO" id="GO:0005886">
    <property type="term" value="C:plasma membrane"/>
    <property type="evidence" value="ECO:0000314"/>
    <property type="project" value="UniProtKB"/>
</dbReference>
<dbReference type="NCBIfam" id="NF040988">
    <property type="entry name" value="MamL"/>
    <property type="match status" value="1"/>
</dbReference>
<organism>
    <name type="scientific">Paramagnetospirillum magneticum (strain ATCC 700264 / AMB-1)</name>
    <name type="common">Magnetospirillum magneticum</name>
    <dbReference type="NCBI Taxonomy" id="342108"/>
    <lineage>
        <taxon>Bacteria</taxon>
        <taxon>Pseudomonadati</taxon>
        <taxon>Pseudomonadota</taxon>
        <taxon>Alphaproteobacteria</taxon>
        <taxon>Rhodospirillales</taxon>
        <taxon>Magnetospirillaceae</taxon>
        <taxon>Paramagnetospirillum</taxon>
    </lineage>
</organism>
<proteinExistence type="inferred from homology"/>